<reference key="1">
    <citation type="journal article" date="1989" name="J. Bacteriol.">
        <title>Nucleotide sequence and genetic organization of the Bacillus subtilis comG operon.</title>
        <authorList>
            <person name="Albano M."/>
            <person name="Breitling R."/>
            <person name="Dubnau D.A."/>
        </authorList>
    </citation>
    <scope>NUCLEOTIDE SEQUENCE [GENOMIC DNA]</scope>
</reference>
<reference key="2">
    <citation type="journal article" date="1996" name="Microbiology">
        <title>Systematic sequencing of the 283 kb 210 degrees-232 degrees region of the Bacillus subtilis genome containing the skin element and many sporulation genes.</title>
        <authorList>
            <person name="Mizuno M."/>
            <person name="Masuda S."/>
            <person name="Takemaru K."/>
            <person name="Hosono S."/>
            <person name="Sato T."/>
            <person name="Takeuchi M."/>
            <person name="Kobayashi Y."/>
        </authorList>
    </citation>
    <scope>NUCLEOTIDE SEQUENCE [GENOMIC DNA]</scope>
    <source>
        <strain>168 / JH642</strain>
    </source>
</reference>
<reference key="3">
    <citation type="journal article" date="1997" name="Nature">
        <title>The complete genome sequence of the Gram-positive bacterium Bacillus subtilis.</title>
        <authorList>
            <person name="Kunst F."/>
            <person name="Ogasawara N."/>
            <person name="Moszer I."/>
            <person name="Albertini A.M."/>
            <person name="Alloni G."/>
            <person name="Azevedo V."/>
            <person name="Bertero M.G."/>
            <person name="Bessieres P."/>
            <person name="Bolotin A."/>
            <person name="Borchert S."/>
            <person name="Borriss R."/>
            <person name="Boursier L."/>
            <person name="Brans A."/>
            <person name="Braun M."/>
            <person name="Brignell S.C."/>
            <person name="Bron S."/>
            <person name="Brouillet S."/>
            <person name="Bruschi C.V."/>
            <person name="Caldwell B."/>
            <person name="Capuano V."/>
            <person name="Carter N.M."/>
            <person name="Choi S.-K."/>
            <person name="Codani J.-J."/>
            <person name="Connerton I.F."/>
            <person name="Cummings N.J."/>
            <person name="Daniel R.A."/>
            <person name="Denizot F."/>
            <person name="Devine K.M."/>
            <person name="Duesterhoeft A."/>
            <person name="Ehrlich S.D."/>
            <person name="Emmerson P.T."/>
            <person name="Entian K.-D."/>
            <person name="Errington J."/>
            <person name="Fabret C."/>
            <person name="Ferrari E."/>
            <person name="Foulger D."/>
            <person name="Fritz C."/>
            <person name="Fujita M."/>
            <person name="Fujita Y."/>
            <person name="Fuma S."/>
            <person name="Galizzi A."/>
            <person name="Galleron N."/>
            <person name="Ghim S.-Y."/>
            <person name="Glaser P."/>
            <person name="Goffeau A."/>
            <person name="Golightly E.J."/>
            <person name="Grandi G."/>
            <person name="Guiseppi G."/>
            <person name="Guy B.J."/>
            <person name="Haga K."/>
            <person name="Haiech J."/>
            <person name="Harwood C.R."/>
            <person name="Henaut A."/>
            <person name="Hilbert H."/>
            <person name="Holsappel S."/>
            <person name="Hosono S."/>
            <person name="Hullo M.-F."/>
            <person name="Itaya M."/>
            <person name="Jones L.-M."/>
            <person name="Joris B."/>
            <person name="Karamata D."/>
            <person name="Kasahara Y."/>
            <person name="Klaerr-Blanchard M."/>
            <person name="Klein C."/>
            <person name="Kobayashi Y."/>
            <person name="Koetter P."/>
            <person name="Koningstein G."/>
            <person name="Krogh S."/>
            <person name="Kumano M."/>
            <person name="Kurita K."/>
            <person name="Lapidus A."/>
            <person name="Lardinois S."/>
            <person name="Lauber J."/>
            <person name="Lazarevic V."/>
            <person name="Lee S.-M."/>
            <person name="Levine A."/>
            <person name="Liu H."/>
            <person name="Masuda S."/>
            <person name="Mauel C."/>
            <person name="Medigue C."/>
            <person name="Medina N."/>
            <person name="Mellado R.P."/>
            <person name="Mizuno M."/>
            <person name="Moestl D."/>
            <person name="Nakai S."/>
            <person name="Noback M."/>
            <person name="Noone D."/>
            <person name="O'Reilly M."/>
            <person name="Ogawa K."/>
            <person name="Ogiwara A."/>
            <person name="Oudega B."/>
            <person name="Park S.-H."/>
            <person name="Parro V."/>
            <person name="Pohl T.M."/>
            <person name="Portetelle D."/>
            <person name="Porwollik S."/>
            <person name="Prescott A.M."/>
            <person name="Presecan E."/>
            <person name="Pujic P."/>
            <person name="Purnelle B."/>
            <person name="Rapoport G."/>
            <person name="Rey M."/>
            <person name="Reynolds S."/>
            <person name="Rieger M."/>
            <person name="Rivolta C."/>
            <person name="Rocha E."/>
            <person name="Roche B."/>
            <person name="Rose M."/>
            <person name="Sadaie Y."/>
            <person name="Sato T."/>
            <person name="Scanlan E."/>
            <person name="Schleich S."/>
            <person name="Schroeter R."/>
            <person name="Scoffone F."/>
            <person name="Sekiguchi J."/>
            <person name="Sekowska A."/>
            <person name="Seror S.J."/>
            <person name="Serror P."/>
            <person name="Shin B.-S."/>
            <person name="Soldo B."/>
            <person name="Sorokin A."/>
            <person name="Tacconi E."/>
            <person name="Takagi T."/>
            <person name="Takahashi H."/>
            <person name="Takemaru K."/>
            <person name="Takeuchi M."/>
            <person name="Tamakoshi A."/>
            <person name="Tanaka T."/>
            <person name="Terpstra P."/>
            <person name="Tognoni A."/>
            <person name="Tosato V."/>
            <person name="Uchiyama S."/>
            <person name="Vandenbol M."/>
            <person name="Vannier F."/>
            <person name="Vassarotti A."/>
            <person name="Viari A."/>
            <person name="Wambutt R."/>
            <person name="Wedler E."/>
            <person name="Wedler H."/>
            <person name="Weitzenegger T."/>
            <person name="Winters P."/>
            <person name="Wipat A."/>
            <person name="Yamamoto H."/>
            <person name="Yamane K."/>
            <person name="Yasumoto K."/>
            <person name="Yata K."/>
            <person name="Yoshida K."/>
            <person name="Yoshikawa H.-F."/>
            <person name="Zumstein E."/>
            <person name="Yoshikawa H."/>
            <person name="Danchin A."/>
        </authorList>
    </citation>
    <scope>NUCLEOTIDE SEQUENCE [LARGE SCALE GENOMIC DNA]</scope>
    <source>
        <strain>168</strain>
    </source>
</reference>
<reference key="4">
    <citation type="journal article" date="1990" name="J. Bacteriol.">
        <title>A membrane protein with similarity to N-methylphenylalanine pilins is essential for DNA binding by competent Bacillus subtilis.</title>
        <authorList>
            <person name="Breitling R."/>
            <person name="Dubnau D.A."/>
        </authorList>
    </citation>
    <scope>CHARACTERIZATION</scope>
</reference>
<reference key="5">
    <citation type="journal article" date="1998" name="J. Bacteriol.">
        <title>All seven comG open reading frames are required for DNA binding during transformation of competent Bacillus subtilis.</title>
        <authorList>
            <person name="Chung Y.S."/>
            <person name="Dubnau D.A."/>
        </authorList>
    </citation>
    <scope>FUNCTION</scope>
</reference>
<reference key="6">
    <citation type="journal article" date="1998" name="Mol. Microbiol.">
        <title>Cell surface localization and processing of the ComG proteins, required for DNA binding during transformation of Bacillus subtilis.</title>
        <authorList>
            <person name="Chung Y.S."/>
            <person name="Breidt F."/>
            <person name="Dubnau D.A."/>
        </authorList>
    </citation>
    <scope>SUBCELLULAR LOCATION</scope>
    <scope>DISULFIDE BOND</scope>
    <source>
        <strain>168</strain>
    </source>
</reference>
<reference key="7">
    <citation type="journal article" date="2002" name="J. Biol. Chem.">
        <title>The bdbDC operon of Bacillus subtilis encodes thiol-disulfide oxidoreductases required for competence development.</title>
        <authorList>
            <person name="Meima R."/>
            <person name="Eschevins C."/>
            <person name="Fillinger S."/>
            <person name="Bolhuis A."/>
            <person name="Hamoen L.W."/>
            <person name="Dorenbos R."/>
            <person name="Quax W.J."/>
            <person name="van Dijl J.M."/>
            <person name="Provvedi R."/>
            <person name="Chen I."/>
            <person name="Dubnau D."/>
            <person name="Bron S."/>
        </authorList>
    </citation>
    <scope>REQUIREMENT FOR BDBDC OPERON FOR COMGC PRODUCTION</scope>
    <source>
        <strain>168</strain>
    </source>
</reference>
<name>COMGC_BACSU</name>
<organism>
    <name type="scientific">Bacillus subtilis (strain 168)</name>
    <dbReference type="NCBI Taxonomy" id="224308"/>
    <lineage>
        <taxon>Bacteria</taxon>
        <taxon>Bacillati</taxon>
        <taxon>Bacillota</taxon>
        <taxon>Bacilli</taxon>
        <taxon>Bacillales</taxon>
        <taxon>Bacillaceae</taxon>
        <taxon>Bacillus</taxon>
    </lineage>
</organism>
<keyword id="KW-1003">Cell membrane</keyword>
<keyword id="KW-0178">Competence</keyword>
<keyword id="KW-1015">Disulfide bond</keyword>
<keyword id="KW-0281">Fimbrium</keyword>
<keyword id="KW-0472">Membrane</keyword>
<keyword id="KW-0488">Methylation</keyword>
<keyword id="KW-1185">Reference proteome</keyword>
<keyword id="KW-0812">Transmembrane</keyword>
<keyword id="KW-1133">Transmembrane helix</keyword>
<keyword id="KW-0813">Transport</keyword>
<dbReference type="EMBL" id="M29691">
    <property type="protein sequence ID" value="AAA83369.1"/>
    <property type="molecule type" value="Genomic_DNA"/>
</dbReference>
<dbReference type="EMBL" id="D84432">
    <property type="protein sequence ID" value="BAA12535.1"/>
    <property type="molecule type" value="Genomic_DNA"/>
</dbReference>
<dbReference type="EMBL" id="AL009126">
    <property type="protein sequence ID" value="CAB14402.1"/>
    <property type="molecule type" value="Genomic_DNA"/>
</dbReference>
<dbReference type="PIR" id="D30338">
    <property type="entry name" value="D30338"/>
</dbReference>
<dbReference type="RefSeq" id="NP_390351.1">
    <property type="nucleotide sequence ID" value="NC_000964.3"/>
</dbReference>
<dbReference type="RefSeq" id="WP_003230162.1">
    <property type="nucleotide sequence ID" value="NZ_OZ025638.1"/>
</dbReference>
<dbReference type="SMR" id="P25955"/>
<dbReference type="FunCoup" id="P25955">
    <property type="interactions" value="17"/>
</dbReference>
<dbReference type="STRING" id="224308.BSU24710"/>
<dbReference type="PaxDb" id="224308-BSU24710"/>
<dbReference type="EnsemblBacteria" id="CAB14402">
    <property type="protein sequence ID" value="CAB14402"/>
    <property type="gene ID" value="BSU_24710"/>
</dbReference>
<dbReference type="GeneID" id="86872982"/>
<dbReference type="GeneID" id="938526"/>
<dbReference type="KEGG" id="bsu:BSU24710"/>
<dbReference type="PATRIC" id="fig|224308.179.peg.2689"/>
<dbReference type="eggNOG" id="COG4537">
    <property type="taxonomic scope" value="Bacteria"/>
</dbReference>
<dbReference type="InParanoid" id="P25955"/>
<dbReference type="OrthoDB" id="1798043at2"/>
<dbReference type="PhylomeDB" id="P25955"/>
<dbReference type="BioCyc" id="BSUB:BSU24710-MONOMER"/>
<dbReference type="Proteomes" id="UP000001570">
    <property type="component" value="Chromosome"/>
</dbReference>
<dbReference type="GO" id="GO:0009986">
    <property type="term" value="C:cell surface"/>
    <property type="evidence" value="ECO:0007669"/>
    <property type="project" value="UniProtKB-SubCell"/>
</dbReference>
<dbReference type="GO" id="GO:0009289">
    <property type="term" value="C:pilus"/>
    <property type="evidence" value="ECO:0007669"/>
    <property type="project" value="UniProtKB-SubCell"/>
</dbReference>
<dbReference type="GO" id="GO:0005886">
    <property type="term" value="C:plasma membrane"/>
    <property type="evidence" value="ECO:0007669"/>
    <property type="project" value="UniProtKB-SubCell"/>
</dbReference>
<dbReference type="GO" id="GO:0030420">
    <property type="term" value="P:establishment of competence for transformation"/>
    <property type="evidence" value="ECO:0007669"/>
    <property type="project" value="UniProtKB-KW"/>
</dbReference>
<dbReference type="Gene3D" id="3.30.700.10">
    <property type="entry name" value="Glycoprotein, Type 4 Pilin"/>
    <property type="match status" value="1"/>
</dbReference>
<dbReference type="InterPro" id="IPR016940">
    <property type="entry name" value="ComGC"/>
</dbReference>
<dbReference type="InterPro" id="IPR012902">
    <property type="entry name" value="N_methyl_site"/>
</dbReference>
<dbReference type="InterPro" id="IPR045584">
    <property type="entry name" value="Pilin-like"/>
</dbReference>
<dbReference type="NCBIfam" id="TIGR02532">
    <property type="entry name" value="IV_pilin_GFxxxE"/>
    <property type="match status" value="1"/>
</dbReference>
<dbReference type="NCBIfam" id="NF040999">
    <property type="entry name" value="pilin_ComGC"/>
    <property type="match status" value="1"/>
</dbReference>
<dbReference type="Pfam" id="PF07963">
    <property type="entry name" value="N_methyl"/>
    <property type="match status" value="1"/>
</dbReference>
<dbReference type="PIRSF" id="PIRSF029928">
    <property type="entry name" value="Late_competence_ComGC"/>
    <property type="match status" value="1"/>
</dbReference>
<dbReference type="SUPFAM" id="SSF54523">
    <property type="entry name" value="Pili subunits"/>
    <property type="match status" value="1"/>
</dbReference>
<dbReference type="PROSITE" id="PS00409">
    <property type="entry name" value="PROKAR_NTER_METHYL"/>
    <property type="match status" value="1"/>
</dbReference>
<proteinExistence type="evidence at protein level"/>
<gene>
    <name type="primary">comGC</name>
    <name type="synonym">comG3</name>
    <name type="ordered locus">BSU24710</name>
</gene>
<sequence>MNEKGFTLVEMLIVLFIISILLLITIPNVTKHNQTIQKKGCEGLQNMVKAQMTAFELDHEGQTPSLADLQSEGYVKKDAVCPNGKRIIITGGEVKVEH</sequence>
<protein>
    <recommendedName>
        <fullName evidence="3">Competence protein ComGC</fullName>
    </recommendedName>
    <alternativeName>
        <fullName>ComG operon protein 3</fullName>
    </alternativeName>
</protein>
<accession>P25955</accession>
<evidence type="ECO:0000250" key="1"/>
<evidence type="ECO:0000250" key="2">
    <source>
        <dbReference type="UniProtKB" id="A0A0H2URU9"/>
    </source>
</evidence>
<evidence type="ECO:0000250" key="3">
    <source>
        <dbReference type="UniProtKB" id="Q8DN88"/>
    </source>
</evidence>
<evidence type="ECO:0000255" key="4"/>
<evidence type="ECO:0000255" key="5">
    <source>
        <dbReference type="PROSITE-ProRule" id="PRU01070"/>
    </source>
</evidence>
<evidence type="ECO:0000269" key="6">
    <source>
    </source>
</evidence>
<evidence type="ECO:0000269" key="7">
    <source>
    </source>
</evidence>
<evidence type="ECO:0000305" key="8"/>
<evidence type="ECO:0000305" key="9">
    <source>
    </source>
</evidence>
<comment type="function">
    <text evidence="3 6">Major component of the type IV-like pilus (T4P) that plays a role in transformation (By similarity). Transformation pili are dynamically extended and retracted, perhaps thereby promoting DNA uptake and transformation (By similarity). Required for transformation and DNA binding (PubMed:9422590).</text>
</comment>
<comment type="subunit">
    <text evidence="3">The transformation pili are flexible filaments, consisting mainly of the major pilin ComGC and smaller amounts of the minor pilins, including at least ComGD, ComGF and ComGG. Homodimer. Forms higher-order multimers. Interacts with ComGG; the interaction is probably direct.</text>
</comment>
<comment type="subcellular location">
    <subcellularLocation>
        <location evidence="7">Cell membrane</location>
        <topology evidence="7">Single-pass membrane protein</topology>
    </subcellularLocation>
    <subcellularLocation>
        <location evidence="7">Cell surface</location>
    </subcellularLocation>
    <subcellularLocation>
        <location evidence="3">Fimbrium</location>
    </subcellularLocation>
    <text>The unprocessed form is an integral membrane protein with its C-terminus outside the membrane. Upon cleavage, it is translocated to the outer face of the membrane.</text>
</comment>
<comment type="PTM">
    <text>Processing of ComGC in competent cells requires ComC, while stabilization, possibly by formation of a disulfide bond, requires BdbC and BdbD.</text>
</comment>
<comment type="similarity">
    <text evidence="8">Belongs to the ComGC family.</text>
</comment>
<feature type="propeptide" id="PRO_0000024266" evidence="1">
    <location>
        <begin position="1"/>
        <end position="5"/>
    </location>
</feature>
<feature type="chain" id="PRO_0000024267" description="Competence protein ComGC">
    <location>
        <begin position="6"/>
        <end position="98"/>
    </location>
</feature>
<feature type="transmembrane region" description="Helical" evidence="4">
    <location>
        <begin position="6"/>
        <end position="26"/>
    </location>
</feature>
<feature type="region of interest" description="May be involved in polymerization of ComGC" evidence="2">
    <location>
        <begin position="4"/>
        <end position="29"/>
    </location>
</feature>
<feature type="modified residue" description="N-methylphenylalanine" evidence="5">
    <location>
        <position position="6"/>
    </location>
</feature>
<feature type="disulfide bond" evidence="9">
    <location>
        <begin position="41"/>
        <end position="81"/>
    </location>
</feature>